<comment type="function">
    <text evidence="1 3 4 5">Possesses dual functions in bile acid metabolism (PubMed:38326608). Acts as a bile salt hydrolase that catalyzes the deconjugation of glycine- and taurine-linked bile salts, which occurs naturally in the intestines of humans, releasing amino acid residues and deconjugated bile salts (bile acids). Can hydrolyze the amide bond in major human conjugated bile salts, such as glycocholate (GCA), taurocholate (TCA) and taurodeoxycholate (TDCA) (PubMed:15823032, PubMed:38326608, PubMed:7618863). Shows a slight preference for taurine-conjugated bile acids as substrates (PubMed:7618863). Also acts as an amine N-acyltransferase that conjugates a wide variety of amino acids to conjugated and non-conjugated bile acids, thus producing bacterial bile acid amidates (BBAAs) - also named microbially conjugated bile acids (MCBAs) - in the gastrointestinal tract (PubMed:38326608). These BBAAs may facilitate communication between the microbiota and host through the activation of human ligand-activated transcription factors (By similarity).</text>
</comment>
<comment type="catalytic activity">
    <reaction evidence="4 5">
        <text>glycocholate + H2O = cholate + glycine</text>
        <dbReference type="Rhea" id="RHEA:19353"/>
        <dbReference type="ChEBI" id="CHEBI:15377"/>
        <dbReference type="ChEBI" id="CHEBI:29746"/>
        <dbReference type="ChEBI" id="CHEBI:29747"/>
        <dbReference type="ChEBI" id="CHEBI:57305"/>
        <dbReference type="EC" id="3.5.1.24"/>
    </reaction>
    <physiologicalReaction direction="left-to-right" evidence="11 12">
        <dbReference type="Rhea" id="RHEA:19354"/>
    </physiologicalReaction>
</comment>
<comment type="catalytic activity">
    <reaction evidence="4 5">
        <text>cholate + taurine = taurocholate + H2O</text>
        <dbReference type="Rhea" id="RHEA:47108"/>
        <dbReference type="ChEBI" id="CHEBI:15377"/>
        <dbReference type="ChEBI" id="CHEBI:29747"/>
        <dbReference type="ChEBI" id="CHEBI:36257"/>
        <dbReference type="ChEBI" id="CHEBI:507393"/>
    </reaction>
    <physiologicalReaction direction="right-to-left" evidence="11 12">
        <dbReference type="Rhea" id="RHEA:47110"/>
    </physiologicalReaction>
</comment>
<comment type="catalytic activity">
    <reaction evidence="3">
        <text>taurodeoxycholate + H2O = deoxycholate + taurine</text>
        <dbReference type="Rhea" id="RHEA:47556"/>
        <dbReference type="ChEBI" id="CHEBI:15377"/>
        <dbReference type="ChEBI" id="CHEBI:23614"/>
        <dbReference type="ChEBI" id="CHEBI:36261"/>
        <dbReference type="ChEBI" id="CHEBI:507393"/>
    </reaction>
    <physiologicalReaction direction="left-to-right" evidence="10">
        <dbReference type="Rhea" id="RHEA:47557"/>
    </physiologicalReaction>
</comment>
<comment type="catalytic activity">
    <reaction evidence="2">
        <text>glycodeoxycholate + H2O = deoxycholate + glycine</text>
        <dbReference type="Rhea" id="RHEA:47552"/>
        <dbReference type="ChEBI" id="CHEBI:15377"/>
        <dbReference type="ChEBI" id="CHEBI:23614"/>
        <dbReference type="ChEBI" id="CHEBI:57305"/>
        <dbReference type="ChEBI" id="CHEBI:82982"/>
    </reaction>
    <physiologicalReaction direction="left-to-right" evidence="2">
        <dbReference type="Rhea" id="RHEA:47553"/>
    </physiologicalReaction>
</comment>
<comment type="catalytic activity">
    <reaction evidence="2">
        <text>chenodeoxycholate + glycine = glycochenodeoxycholate + H2O</text>
        <dbReference type="Rhea" id="RHEA:47112"/>
        <dbReference type="ChEBI" id="CHEBI:15377"/>
        <dbReference type="ChEBI" id="CHEBI:36234"/>
        <dbReference type="ChEBI" id="CHEBI:36252"/>
        <dbReference type="ChEBI" id="CHEBI:57305"/>
    </reaction>
    <physiologicalReaction direction="right-to-left" evidence="2">
        <dbReference type="Rhea" id="RHEA:47114"/>
    </physiologicalReaction>
</comment>
<comment type="catalytic activity">
    <reaction evidence="2">
        <text>taurochenodeoxycholate + H2O = chenodeoxycholate + taurine</text>
        <dbReference type="Rhea" id="RHEA:16309"/>
        <dbReference type="ChEBI" id="CHEBI:9407"/>
        <dbReference type="ChEBI" id="CHEBI:15377"/>
        <dbReference type="ChEBI" id="CHEBI:36234"/>
        <dbReference type="ChEBI" id="CHEBI:507393"/>
    </reaction>
    <physiologicalReaction direction="left-to-right" evidence="2">
        <dbReference type="Rhea" id="RHEA:16310"/>
    </physiologicalReaction>
</comment>
<comment type="catalytic activity">
    <reaction evidence="4">
        <text>an L-alpha-amino acid + cholate = an N-choloyl-L-alpha-amino acid + H2O</text>
        <dbReference type="Rhea" id="RHEA:79087"/>
        <dbReference type="ChEBI" id="CHEBI:15377"/>
        <dbReference type="ChEBI" id="CHEBI:29747"/>
        <dbReference type="ChEBI" id="CHEBI:59869"/>
        <dbReference type="ChEBI" id="CHEBI:229709"/>
    </reaction>
    <physiologicalReaction direction="left-to-right" evidence="11">
        <dbReference type="Rhea" id="RHEA:79088"/>
    </physiologicalReaction>
</comment>
<comment type="catalytic activity">
    <reaction evidence="4">
        <text>an L-alpha-amino acid + taurocholate = an N-choloyl-L-alpha-amino acid + taurine</text>
        <dbReference type="Rhea" id="RHEA:79091"/>
        <dbReference type="ChEBI" id="CHEBI:36257"/>
        <dbReference type="ChEBI" id="CHEBI:59869"/>
        <dbReference type="ChEBI" id="CHEBI:229709"/>
        <dbReference type="ChEBI" id="CHEBI:507393"/>
    </reaction>
    <physiologicalReaction direction="left-to-right" evidence="11">
        <dbReference type="Rhea" id="RHEA:79092"/>
    </physiologicalReaction>
</comment>
<comment type="catalytic activity">
    <reaction evidence="4">
        <text>glycocholate + an L-alpha-amino acid = an N-choloyl-L-alpha-amino acid + glycine</text>
        <dbReference type="Rhea" id="RHEA:79095"/>
        <dbReference type="ChEBI" id="CHEBI:29746"/>
        <dbReference type="ChEBI" id="CHEBI:57305"/>
        <dbReference type="ChEBI" id="CHEBI:59869"/>
        <dbReference type="ChEBI" id="CHEBI:229709"/>
    </reaction>
    <physiologicalReaction direction="left-to-right" evidence="11">
        <dbReference type="Rhea" id="RHEA:79096"/>
    </physiologicalReaction>
</comment>
<comment type="catalytic activity">
    <reaction evidence="4">
        <text>cholate + L-histidine = L-histidocholate + H2O</text>
        <dbReference type="Rhea" id="RHEA:79099"/>
        <dbReference type="ChEBI" id="CHEBI:15377"/>
        <dbReference type="ChEBI" id="CHEBI:29747"/>
        <dbReference type="ChEBI" id="CHEBI:57595"/>
        <dbReference type="ChEBI" id="CHEBI:229712"/>
    </reaction>
    <physiologicalReaction direction="left-to-right" evidence="11">
        <dbReference type="Rhea" id="RHEA:79100"/>
    </physiologicalReaction>
</comment>
<comment type="catalytic activity">
    <reaction evidence="4">
        <text>taurocholate + L-histidine = L-histidocholate + taurine</text>
        <dbReference type="Rhea" id="RHEA:79103"/>
        <dbReference type="ChEBI" id="CHEBI:36257"/>
        <dbReference type="ChEBI" id="CHEBI:57595"/>
        <dbReference type="ChEBI" id="CHEBI:229712"/>
        <dbReference type="ChEBI" id="CHEBI:507393"/>
    </reaction>
    <physiologicalReaction direction="left-to-right" evidence="11">
        <dbReference type="Rhea" id="RHEA:79104"/>
    </physiologicalReaction>
</comment>
<comment type="catalytic activity">
    <reaction evidence="4">
        <text>glycocholate + L-histidine = L-histidocholate + glycine</text>
        <dbReference type="Rhea" id="RHEA:79107"/>
        <dbReference type="ChEBI" id="CHEBI:29746"/>
        <dbReference type="ChEBI" id="CHEBI:57305"/>
        <dbReference type="ChEBI" id="CHEBI:57595"/>
        <dbReference type="ChEBI" id="CHEBI:229712"/>
    </reaction>
    <physiologicalReaction direction="left-to-right" evidence="11">
        <dbReference type="Rhea" id="RHEA:79108"/>
    </physiologicalReaction>
</comment>
<comment type="catalytic activity">
    <reaction evidence="4">
        <text>cholate + L-arginine = L-arginocholate + H2O</text>
        <dbReference type="Rhea" id="RHEA:79111"/>
        <dbReference type="ChEBI" id="CHEBI:15377"/>
        <dbReference type="ChEBI" id="CHEBI:29747"/>
        <dbReference type="ChEBI" id="CHEBI:32682"/>
        <dbReference type="ChEBI" id="CHEBI:229713"/>
    </reaction>
    <physiologicalReaction direction="left-to-right" evidence="11">
        <dbReference type="Rhea" id="RHEA:79112"/>
    </physiologicalReaction>
</comment>
<comment type="catalytic activity">
    <reaction evidence="4">
        <text>taurocholate + L-arginine = L-arginocholate + taurine</text>
        <dbReference type="Rhea" id="RHEA:79115"/>
        <dbReference type="ChEBI" id="CHEBI:32682"/>
        <dbReference type="ChEBI" id="CHEBI:36257"/>
        <dbReference type="ChEBI" id="CHEBI:229713"/>
        <dbReference type="ChEBI" id="CHEBI:507393"/>
    </reaction>
    <physiologicalReaction direction="left-to-right" evidence="11">
        <dbReference type="Rhea" id="RHEA:79116"/>
    </physiologicalReaction>
</comment>
<comment type="catalytic activity">
    <reaction evidence="4">
        <text>glycocholate + L-arginine = L-arginocholate + glycine</text>
        <dbReference type="Rhea" id="RHEA:79119"/>
        <dbReference type="ChEBI" id="CHEBI:29746"/>
        <dbReference type="ChEBI" id="CHEBI:32682"/>
        <dbReference type="ChEBI" id="CHEBI:57305"/>
        <dbReference type="ChEBI" id="CHEBI:229713"/>
    </reaction>
    <physiologicalReaction direction="left-to-right" evidence="11">
        <dbReference type="Rhea" id="RHEA:79120"/>
    </physiologicalReaction>
</comment>
<comment type="catalytic activity">
    <reaction evidence="4">
        <text>cholate + L-phenylalanine = L-phenylalanocholate + H2O</text>
        <dbReference type="Rhea" id="RHEA:79123"/>
        <dbReference type="ChEBI" id="CHEBI:15377"/>
        <dbReference type="ChEBI" id="CHEBI:29747"/>
        <dbReference type="ChEBI" id="CHEBI:58095"/>
        <dbReference type="ChEBI" id="CHEBI:229714"/>
    </reaction>
    <physiologicalReaction direction="left-to-right" evidence="11">
        <dbReference type="Rhea" id="RHEA:79124"/>
    </physiologicalReaction>
</comment>
<comment type="catalytic activity">
    <reaction evidence="4">
        <text>taurocholate + L-phenylalanine = L-phenylalanocholate + taurine</text>
        <dbReference type="Rhea" id="RHEA:79127"/>
        <dbReference type="ChEBI" id="CHEBI:36257"/>
        <dbReference type="ChEBI" id="CHEBI:58095"/>
        <dbReference type="ChEBI" id="CHEBI:229714"/>
        <dbReference type="ChEBI" id="CHEBI:507393"/>
    </reaction>
    <physiologicalReaction direction="left-to-right" evidence="11">
        <dbReference type="Rhea" id="RHEA:79128"/>
    </physiologicalReaction>
</comment>
<comment type="biophysicochemical properties">
    <kinetics>
        <KM evidence="4">1.443 mM for taurocholate (in the TCA deconjugation assay)</KM>
    </kinetics>
    <phDependence>
        <text evidence="4 5">Hydrolase activity occurs over a broad pH range (pH 3-7) with an optimum pH of 5.5 (PubMed:38326608, PubMed:7618863). Optimum pH is 5.3 for acyltransferase activity, which is close to that of lower human gastrointestinal tract (PubMed:38326608).</text>
    </phDependence>
</comment>
<comment type="pathway">
    <text evidence="11 12">Lipid metabolism; bile acid biosynthesis.</text>
</comment>
<comment type="subunit">
    <text evidence="3 5">Homotetramer (PubMed:15823032, PubMed:7618863). The tetramer consists of a dimer of dimers (PubMed:15823032).</text>
</comment>
<comment type="disruption phenotype">
    <text evidence="5">Cells lacking this gene continue to express conjugated bile acid hydrolase activity at 86% of wild-type levels.</text>
</comment>
<comment type="similarity">
    <text evidence="9">Belongs to the peptidase C59 family.</text>
</comment>
<evidence type="ECO:0000250" key="1">
    <source>
        <dbReference type="UniProtKB" id="P0DXD2"/>
    </source>
</evidence>
<evidence type="ECO:0000250" key="2">
    <source>
        <dbReference type="UniProtKB" id="Q9KK62"/>
    </source>
</evidence>
<evidence type="ECO:0000269" key="3">
    <source>
    </source>
</evidence>
<evidence type="ECO:0000269" key="4">
    <source>
    </source>
</evidence>
<evidence type="ECO:0000269" key="5">
    <source>
    </source>
</evidence>
<evidence type="ECO:0000303" key="6">
    <source>
    </source>
</evidence>
<evidence type="ECO:0000303" key="7">
    <source>
    </source>
</evidence>
<evidence type="ECO:0000303" key="8">
    <source>
    </source>
</evidence>
<evidence type="ECO:0000305" key="9"/>
<evidence type="ECO:0000305" key="10">
    <source>
    </source>
</evidence>
<evidence type="ECO:0000305" key="11">
    <source>
    </source>
</evidence>
<evidence type="ECO:0000305" key="12">
    <source>
    </source>
</evidence>
<evidence type="ECO:0007744" key="13">
    <source>
        <dbReference type="PDB" id="2BJF"/>
    </source>
</evidence>
<evidence type="ECO:0007744" key="14">
    <source>
        <dbReference type="PDB" id="2BJG"/>
    </source>
</evidence>
<evidence type="ECO:0007829" key="15">
    <source>
        <dbReference type="PDB" id="2BJF"/>
    </source>
</evidence>
<evidence type="ECO:0007829" key="16">
    <source>
        <dbReference type="PDB" id="2RG2"/>
    </source>
</evidence>
<evidence type="ECO:0007829" key="17">
    <source>
        <dbReference type="PDB" id="2RLC"/>
    </source>
</evidence>
<proteinExistence type="evidence at protein level"/>
<accession>P54965</accession>
<organism>
    <name type="scientific">Clostridium perfringens (strain 13 / Type A)</name>
    <dbReference type="NCBI Taxonomy" id="195102"/>
    <lineage>
        <taxon>Bacteria</taxon>
        <taxon>Bacillati</taxon>
        <taxon>Bacillota</taxon>
        <taxon>Clostridia</taxon>
        <taxon>Eubacteriales</taxon>
        <taxon>Clostridiaceae</taxon>
        <taxon>Clostridium</taxon>
    </lineage>
</organism>
<keyword id="KW-0002">3D-structure</keyword>
<keyword id="KW-0903">Direct protein sequencing</keyword>
<keyword id="KW-0378">Hydrolase</keyword>
<keyword id="KW-0443">Lipid metabolism</keyword>
<keyword id="KW-1185">Reference proteome</keyword>
<keyword id="KW-0808">Transferase</keyword>
<feature type="initiator methionine" description="Removed" evidence="3">
    <location>
        <position position="1"/>
    </location>
</feature>
<feature type="chain" id="PRO_0000073019" description="Bile salt hydrolase/transferase">
    <location>
        <begin position="2"/>
        <end position="329"/>
    </location>
</feature>
<feature type="active site" description="Nucleophile; acyl-thioester intermediate" evidence="10 11">
    <location>
        <position position="2"/>
    </location>
</feature>
<feature type="binding site" evidence="3 13">
    <location>
        <position position="2"/>
    </location>
    <ligand>
        <name>deoxycholate</name>
        <dbReference type="ChEBI" id="CHEBI:23614"/>
    </ligand>
</feature>
<feature type="binding site" evidence="3 13">
    <location>
        <position position="18"/>
    </location>
    <ligand>
        <name>deoxycholate</name>
        <dbReference type="ChEBI" id="CHEBI:23614"/>
    </ligand>
</feature>
<feature type="binding site" evidence="3 13">
    <location>
        <position position="82"/>
    </location>
    <ligand>
        <name>taurine</name>
        <dbReference type="ChEBI" id="CHEBI:507393"/>
    </ligand>
</feature>
<feature type="mutagenesis site" description="Loss of both hydrolase and acyltransferase activities." evidence="4">
    <original>C</original>
    <variation>A</variation>
    <location>
        <position position="2"/>
    </location>
</feature>
<feature type="mutagenesis site" description="Impaired MCBA production. No change in hydrolase activity." evidence="4">
    <original>N</original>
    <variation>Y</variation>
    <location>
        <position position="82"/>
    </location>
</feature>
<feature type="strand" evidence="15">
    <location>
        <begin position="3"/>
        <end position="8"/>
    </location>
</feature>
<feature type="strand" evidence="15">
    <location>
        <begin position="14"/>
        <end position="24"/>
    </location>
</feature>
<feature type="strand" evidence="15">
    <location>
        <begin position="29"/>
        <end position="33"/>
    </location>
</feature>
<feature type="strand" evidence="15">
    <location>
        <begin position="38"/>
        <end position="40"/>
    </location>
</feature>
<feature type="turn" evidence="15">
    <location>
        <begin position="42"/>
        <end position="44"/>
    </location>
</feature>
<feature type="strand" evidence="15">
    <location>
        <begin position="47"/>
        <end position="49"/>
    </location>
</feature>
<feature type="strand" evidence="15">
    <location>
        <begin position="54"/>
        <end position="61"/>
    </location>
</feature>
<feature type="strand" evidence="15">
    <location>
        <begin position="64"/>
        <end position="72"/>
    </location>
</feature>
<feature type="strand" evidence="15">
    <location>
        <begin position="77"/>
        <end position="82"/>
    </location>
</feature>
<feature type="turn" evidence="16">
    <location>
        <begin position="84"/>
        <end position="86"/>
    </location>
</feature>
<feature type="strand" evidence="15">
    <location>
        <begin position="90"/>
        <end position="92"/>
    </location>
</feature>
<feature type="strand" evidence="15">
    <location>
        <begin position="97"/>
        <end position="101"/>
    </location>
</feature>
<feature type="helix" evidence="15">
    <location>
        <begin position="102"/>
        <end position="104"/>
    </location>
</feature>
<feature type="helix" evidence="15">
    <location>
        <begin position="105"/>
        <end position="112"/>
    </location>
</feature>
<feature type="helix" evidence="15">
    <location>
        <begin position="116"/>
        <end position="123"/>
    </location>
</feature>
<feature type="strand" evidence="15">
    <location>
        <begin position="126"/>
        <end position="129"/>
    </location>
</feature>
<feature type="strand" evidence="15">
    <location>
        <begin position="142"/>
        <end position="147"/>
    </location>
</feature>
<feature type="strand" evidence="15">
    <location>
        <begin position="153"/>
        <end position="158"/>
    </location>
</feature>
<feature type="strand" evidence="15">
    <location>
        <begin position="163"/>
        <end position="167"/>
    </location>
</feature>
<feature type="strand" evidence="16">
    <location>
        <begin position="170"/>
        <end position="173"/>
    </location>
</feature>
<feature type="strand" evidence="15">
    <location>
        <begin position="175"/>
        <end position="177"/>
    </location>
</feature>
<feature type="helix" evidence="15">
    <location>
        <begin position="179"/>
        <end position="186"/>
    </location>
</feature>
<feature type="helix" evidence="15">
    <location>
        <begin position="187"/>
        <end position="189"/>
    </location>
</feature>
<feature type="strand" evidence="15">
    <location>
        <begin position="199"/>
        <end position="202"/>
    </location>
</feature>
<feature type="strand" evidence="15">
    <location>
        <begin position="205"/>
        <end position="208"/>
    </location>
</feature>
<feature type="strand" evidence="17">
    <location>
        <begin position="210"/>
        <end position="212"/>
    </location>
</feature>
<feature type="helix" evidence="15">
    <location>
        <begin position="214"/>
        <end position="216"/>
    </location>
</feature>
<feature type="helix" evidence="15">
    <location>
        <begin position="225"/>
        <end position="243"/>
    </location>
</feature>
<feature type="helix" evidence="15">
    <location>
        <begin position="244"/>
        <end position="246"/>
    </location>
</feature>
<feature type="helix" evidence="15">
    <location>
        <begin position="249"/>
        <end position="257"/>
    </location>
</feature>
<feature type="turn" evidence="15">
    <location>
        <begin position="263"/>
        <end position="265"/>
    </location>
</feature>
<feature type="strand" evidence="15">
    <location>
        <begin position="275"/>
        <end position="283"/>
    </location>
</feature>
<feature type="turn" evidence="15">
    <location>
        <begin position="284"/>
        <end position="287"/>
    </location>
</feature>
<feature type="strand" evidence="15">
    <location>
        <begin position="288"/>
        <end position="295"/>
    </location>
</feature>
<feature type="strand" evidence="15">
    <location>
        <begin position="300"/>
        <end position="303"/>
    </location>
</feature>
<feature type="helix" evidence="15">
    <location>
        <begin position="304"/>
        <end position="306"/>
    </location>
</feature>
<feature type="strand" evidence="15">
    <location>
        <begin position="315"/>
        <end position="318"/>
    </location>
</feature>
<gene>
    <name type="primary">cbh</name>
    <name type="ordered locus">CPE0709</name>
</gene>
<reference key="1">
    <citation type="journal article" date="1995" name="Appl. Environ. Microbiol.">
        <title>Cloning and characterization of a conjugated bile acid hydrolase gene from Clostridium perfringens.</title>
        <authorList>
            <person name="Coleman J.P."/>
            <person name="Hudson L.L."/>
        </authorList>
    </citation>
    <scope>NUCLEOTIDE SEQUENCE [GENOMIC DNA]</scope>
    <scope>FUNCTION</scope>
    <scope>CATALYTIC ACTIVITY</scope>
    <scope>BIOPHYSICOCHEMICAL PROPERTIES</scope>
    <scope>DISRUPTION PHENOTYPE</scope>
    <scope>SUBUNIT</scope>
    <source>
        <strain>13 / Type A</strain>
    </source>
</reference>
<reference key="2">
    <citation type="journal article" date="2002" name="Proc. Natl. Acad. Sci. U.S.A.">
        <title>Complete genome sequence of Clostridium perfringens, an anaerobic flesh-eater.</title>
        <authorList>
            <person name="Shimizu T."/>
            <person name="Ohtani K."/>
            <person name="Hirakawa H."/>
            <person name="Ohshima K."/>
            <person name="Yamashita A."/>
            <person name="Shiba T."/>
            <person name="Ogasawara N."/>
            <person name="Hattori M."/>
            <person name="Kuhara S."/>
            <person name="Hayashi H."/>
        </authorList>
    </citation>
    <scope>NUCLEOTIDE SEQUENCE [LARGE SCALE GENOMIC DNA]</scope>
    <source>
        <strain>13 / Type A</strain>
    </source>
</reference>
<reference evidence="13 14" key="3">
    <citation type="journal article" date="2005" name="Biochemistry">
        <title>Conjugated bile acid hydrolase is a tetrameric N-terminal thiol hydrolase with specific recognition of its cholyl but not of its tauryl product.</title>
        <authorList>
            <person name="Rossocha M."/>
            <person name="Schultz-Heienbrok R."/>
            <person name="von Moeller H."/>
            <person name="Coleman J.P."/>
            <person name="Saenger W."/>
        </authorList>
    </citation>
    <scope>PROTEIN SEQUENCE OF N-TERMINUS</scope>
    <scope>X-RAY CRYSTALLOGRAPHY (1.7 ANGSTROMS) OF APOENZYME AND IN COMPLEX WITH REACTION PRODUCTS DEOXYCHOLATE AND TAURINE</scope>
    <scope>FUNCTION</scope>
    <scope>CATALYTIC ACTIVITY</scope>
    <scope>SUBUNIT</scope>
    <scope>ACTIVE SITE</scope>
    <scope>REACTION MECHANISM</scope>
</reference>
<reference key="4">
    <citation type="journal article" date="2024" name="Nature">
        <title>Bile salt hydrolase acyltransferase activity expands bile acid diversity.</title>
        <authorList>
            <person name="Guzior D.V."/>
            <person name="Okros M."/>
            <person name="Shivel M."/>
            <person name="Armwald B."/>
            <person name="Bridges C."/>
            <person name="Fu Y."/>
            <person name="Martin C."/>
            <person name="Schilmiller A.L."/>
            <person name="Miller W.M."/>
            <person name="Ziegler K.M."/>
            <person name="Sims M.D."/>
            <person name="Maddens M.E."/>
            <person name="Graham S.F."/>
            <person name="Hausinger R.P."/>
            <person name="Quinn R.A."/>
        </authorList>
    </citation>
    <scope>FUNCTION</scope>
    <scope>CATALYTIC ACTIVITY</scope>
    <scope>BIOPHYSICOCHEMICAL PROPERTIES</scope>
    <scope>MUTAGENESIS OF CYS-2 AND ASN-82</scope>
    <scope>ACTIVE SITE</scope>
</reference>
<sequence length="329" mass="37185">MCTGLALETKDGLHLFGRNMDIEYSFNQSIIFIPRNFKCVNKSNKKELTTKYAVLGMGTIFDDYPTFADGMNEKGLGCAGLNFPVYVSYSKEDIEGKTNIPVYNFLLWVLANFSSVEEVKEALKNANIVDIPISENIPNTTLHWMISDITGKSIVVEQTKEKLNVFDNNIGVLTNSPTFDWHVANLNQYVGLRYNQVPEFKLGDQSLTALGQGTGLVGLPGDFTPASRFIRVAFLRDAMIKNDKDSIDLIEFFHILNNVAMVRGSTRTVEEKSDLTQYTSCMCLEKGIYYYNTYENNQINAIDMNKENLDGNEIKTYKYNKTLSINHVN</sequence>
<name>CBH_CLOPE</name>
<protein>
    <recommendedName>
        <fullName evidence="7">Bile salt hydrolase/transferase</fullName>
        <shortName evidence="7">BSH/T</shortName>
    </recommendedName>
    <alternativeName>
        <fullName evidence="11">Bile acid amine N-acyltransferase</fullName>
        <ecNumber evidence="4">2.3.1.-</ecNumber>
    </alternativeName>
    <alternativeName>
        <fullName evidence="6">Bile salt hydrolase</fullName>
        <shortName evidence="6">BSH</shortName>
    </alternativeName>
    <alternativeName>
        <fullName evidence="8">CBAH-1</fullName>
    </alternativeName>
    <alternativeName>
        <fullName evidence="12">Choloylglycine hydrolase</fullName>
        <ecNumber evidence="5">3.5.1.24</ecNumber>
    </alternativeName>
    <alternativeName>
        <fullName evidence="6 8">Conjugated bile acid hydrolase</fullName>
        <shortName evidence="6 8">CBAH</shortName>
        <ecNumber evidence="3 5">3.5.1.-</ecNumber>
    </alternativeName>
</protein>
<dbReference type="EC" id="2.3.1.-" evidence="4"/>
<dbReference type="EC" id="3.5.1.24" evidence="5"/>
<dbReference type="EC" id="3.5.1.-" evidence="3 5"/>
<dbReference type="EMBL" id="U20191">
    <property type="protein sequence ID" value="AAC43454.1"/>
    <property type="molecule type" value="Genomic_DNA"/>
</dbReference>
<dbReference type="EMBL" id="BA000016">
    <property type="protein sequence ID" value="BAB80415.1"/>
    <property type="molecule type" value="Genomic_DNA"/>
</dbReference>
<dbReference type="PIR" id="I40881">
    <property type="entry name" value="I40881"/>
</dbReference>
<dbReference type="PDB" id="2BJF">
    <property type="method" value="X-ray"/>
    <property type="resolution" value="1.67 A"/>
    <property type="chains" value="A=1-329"/>
</dbReference>
<dbReference type="PDB" id="2BJG">
    <property type="method" value="X-ray"/>
    <property type="resolution" value="2.10 A"/>
    <property type="chains" value="A/B=1-329"/>
</dbReference>
<dbReference type="PDB" id="2RF8">
    <property type="method" value="X-ray"/>
    <property type="resolution" value="2.90 A"/>
    <property type="chains" value="A/B=1-329"/>
</dbReference>
<dbReference type="PDB" id="2RG2">
    <property type="method" value="X-ray"/>
    <property type="resolution" value="1.80 A"/>
    <property type="chains" value="A=2-329"/>
</dbReference>
<dbReference type="PDB" id="2RLC">
    <property type="method" value="X-ray"/>
    <property type="resolution" value="1.80 A"/>
    <property type="chains" value="A=2-329"/>
</dbReference>
<dbReference type="PDBsum" id="2BJF"/>
<dbReference type="PDBsum" id="2BJG"/>
<dbReference type="PDBsum" id="2RF8"/>
<dbReference type="PDBsum" id="2RG2"/>
<dbReference type="PDBsum" id="2RLC"/>
<dbReference type="SMR" id="P54965"/>
<dbReference type="STRING" id="195102.gene:10489971"/>
<dbReference type="DrugBank" id="DB02659">
    <property type="generic name" value="Cholic Acid"/>
</dbReference>
<dbReference type="DrugBank" id="DB03619">
    <property type="generic name" value="Deoxycholic acid"/>
</dbReference>
<dbReference type="DrugBank" id="DB01956">
    <property type="generic name" value="Taurine"/>
</dbReference>
<dbReference type="SwissLipids" id="SLP:000001734"/>
<dbReference type="MEROPS" id="C59.951"/>
<dbReference type="KEGG" id="cpe:CPE0709"/>
<dbReference type="HOGENOM" id="CLU_045206_1_0_9"/>
<dbReference type="BioCyc" id="MetaCyc:MONOMER-15681"/>
<dbReference type="BRENDA" id="3.5.1.24">
    <property type="organism ID" value="1503"/>
</dbReference>
<dbReference type="SABIO-RK" id="P54965"/>
<dbReference type="UniPathway" id="UPA00221"/>
<dbReference type="EvolutionaryTrace" id="P54965"/>
<dbReference type="Proteomes" id="UP000000818">
    <property type="component" value="Chromosome"/>
</dbReference>
<dbReference type="GO" id="GO:0047742">
    <property type="term" value="F:chenodeoxycholoyltaurine hydrolase activity"/>
    <property type="evidence" value="ECO:0007669"/>
    <property type="project" value="RHEA"/>
</dbReference>
<dbReference type="GO" id="GO:0045302">
    <property type="term" value="F:choloylglycine hydrolase activity"/>
    <property type="evidence" value="ECO:0007669"/>
    <property type="project" value="UniProtKB-EC"/>
</dbReference>
<dbReference type="GO" id="GO:0016740">
    <property type="term" value="F:transferase activity"/>
    <property type="evidence" value="ECO:0007669"/>
    <property type="project" value="UniProtKB-KW"/>
</dbReference>
<dbReference type="GO" id="GO:0006699">
    <property type="term" value="P:bile acid biosynthetic process"/>
    <property type="evidence" value="ECO:0007669"/>
    <property type="project" value="UniProtKB-UniPathway"/>
</dbReference>
<dbReference type="CDD" id="cd00542">
    <property type="entry name" value="Ntn_PVA"/>
    <property type="match status" value="1"/>
</dbReference>
<dbReference type="Gene3D" id="3.60.60.10">
    <property type="entry name" value="Penicillin V Acylase, Chain A"/>
    <property type="match status" value="1"/>
</dbReference>
<dbReference type="InterPro" id="IPR047711">
    <property type="entry name" value="CBAH"/>
</dbReference>
<dbReference type="InterPro" id="IPR029132">
    <property type="entry name" value="CBAH/NAAA_C"/>
</dbReference>
<dbReference type="InterPro" id="IPR029055">
    <property type="entry name" value="Ntn_hydrolases_N"/>
</dbReference>
<dbReference type="InterPro" id="IPR052193">
    <property type="entry name" value="Peptidase_C59"/>
</dbReference>
<dbReference type="NCBIfam" id="NF038245">
    <property type="entry name" value="bile_salt_hydro"/>
    <property type="match status" value="1"/>
</dbReference>
<dbReference type="PANTHER" id="PTHR35527">
    <property type="entry name" value="CHOLOYLGLYCINE HYDROLASE"/>
    <property type="match status" value="1"/>
</dbReference>
<dbReference type="PANTHER" id="PTHR35527:SF2">
    <property type="entry name" value="HYDROLASE"/>
    <property type="match status" value="1"/>
</dbReference>
<dbReference type="Pfam" id="PF02275">
    <property type="entry name" value="CBAH"/>
    <property type="match status" value="1"/>
</dbReference>
<dbReference type="SUPFAM" id="SSF56235">
    <property type="entry name" value="N-terminal nucleophile aminohydrolases (Ntn hydrolases)"/>
    <property type="match status" value="1"/>
</dbReference>